<comment type="function">
    <text evidence="4 5 9">CAHS proteins are cytosolic heat soluble proteins that seem to contribute to the anhydrobiosis in tardigrades, but their specific mechanisms are yet to be identified (PubMed:28306513, PubMed:33545053). It is possible that protection during anhydrobiosis might occur via the stabilization of vitrifying small molecules such as sugars, but not via the direct glass transition of CAHS proteins themselves (Probable).</text>
</comment>
<comment type="subcellular location">
    <subcellularLocation>
        <location evidence="8">Cytoplasm</location>
    </subcellularLocation>
</comment>
<comment type="domain">
    <text evidence="1">CAHS proteins contain 2 repeats of 19-mer peptides designated as CAHS-motifs that comprise each two octapeptides connected by a tripeptide (By similarity).</text>
</comment>
<comment type="miscellaneous">
    <text evidence="4">Trehalose, a disaccharide essential for several organisms to survive drying, is detected at low levels or not at all in some tardigrade species, indicating that tardigrades possess potentially novel mechanisms for surviving desiccation involving tardigrade-specific intrinsically disordered proteins (TDPs) (PubMed:28306513).</text>
</comment>
<comment type="similarity">
    <text evidence="7">Belongs to the Cytosolic-abundant heat soluble protein (CAHS) family.</text>
</comment>
<comment type="caution">
    <text evidence="4 5">It was suggested that CAHS proteins were intrinsically unstructured and show heat-dependent glass transition, which contributes to the vitrification of cells, and this further leads to desiccation tolerance (PubMed:28306513). However, more recent studies led to the conclusion that there was no evidence supporting glass transition of CAHS proteins to be contributing to the glass transition of the whole tardigrade (PubMed:33545053).</text>
</comment>
<sequence>MATKESKYERVEKVNVDADGATLVKNIGEDRGKEDPGMNFQDKRPANLVPGAPAGVIPNRIESLPTDRAGQRLREHLSESERLRVSRSSTSSKSSSFVEPSLKYRGEIGPIGKNGEFVASSNRQNSSSNVSSSDNSERASPASRNSNPGMNNGMTTQRTTVITESSVQGLGAQRTVPIQPHQQREDHEVITHESHARAPETTVVTIPTTRFESAQLESRRDGRTYTEDKELTIPAPVVAPQIHAHQQVNMSGGTSATIHATTDLHLASEAQINDMGPEEYERYRAKVEALARIHEDETSRKAAAYRNAVEADAELIRQTLERQHMRDIEFRKDLVESSVDRQQQEIRLEAEYAMRALEQERVNARAALDQAMASTNIDVNIDSAIGTTHSQGRVTTTSESRTSQARGPATAAVI</sequence>
<keyword id="KW-0175">Coiled coil</keyword>
<keyword id="KW-0963">Cytoplasm</keyword>
<keyword id="KW-0677">Repeat</keyword>
<keyword id="KW-0346">Stress response</keyword>
<protein>
    <recommendedName>
        <fullName evidence="6">Cytosolic-abundant heat soluble protein 89226</fullName>
        <shortName evidence="6">CAHS 89226</shortName>
    </recommendedName>
    <alternativeName>
        <fullName evidence="6">Tardigrade-specific intrinsically disordered protein CAHS 89226</fullName>
        <shortName evidence="6">TDP CAHS 89226</shortName>
    </alternativeName>
</protein>
<reference key="1">
    <citation type="journal article" date="2017" name="Mol. Cell">
        <title>Tardigrades use intrinsically disordered proteins to survive desiccation.</title>
        <authorList>
            <person name="Boothby T.C."/>
            <person name="Tapia H."/>
            <person name="Brozena A.H."/>
            <person name="Piszkiewicz S."/>
            <person name="Smith A.E."/>
            <person name="Giovannini I."/>
            <person name="Rebecchi L."/>
            <person name="Pielak G.J."/>
            <person name="Koshland D."/>
            <person name="Goldstein B."/>
        </authorList>
    </citation>
    <scope>FUNCTION</scope>
</reference>
<reference key="2">
    <citation type="journal article" date="2021" name="Mol. Cell">
        <title>Reconsidering the 'glass transition' hypothesis of intrinsically unstructured CAHS proteins in desiccation tolerance of tardigrades.</title>
        <authorList>
            <person name="Arakawa K."/>
            <person name="Numata K."/>
        </authorList>
    </citation>
    <scope>FUNCTION</scope>
</reference>
<accession>P0CU47</accession>
<evidence type="ECO:0000250" key="1">
    <source>
        <dbReference type="UniProtKB" id="J7M799"/>
    </source>
</evidence>
<evidence type="ECO:0000255" key="2"/>
<evidence type="ECO:0000256" key="3">
    <source>
        <dbReference type="SAM" id="MobiDB-lite"/>
    </source>
</evidence>
<evidence type="ECO:0000269" key="4">
    <source>
    </source>
</evidence>
<evidence type="ECO:0000269" key="5">
    <source>
    </source>
</evidence>
<evidence type="ECO:0000303" key="6">
    <source>
    </source>
</evidence>
<evidence type="ECO:0000305" key="7"/>
<evidence type="ECO:0000305" key="8">
    <source>
    </source>
</evidence>
<evidence type="ECO:0000305" key="9">
    <source>
    </source>
</evidence>
<name>CAHS5_HYPEX</name>
<feature type="chain" id="PRO_0000440194" description="Cytosolic-abundant heat soluble protein 89226">
    <location>
        <begin position="1"/>
        <end position="414"/>
    </location>
</feature>
<feature type="region of interest" description="Disordered" evidence="3">
    <location>
        <begin position="27"/>
        <end position="155"/>
    </location>
</feature>
<feature type="region of interest" description="CAHS motif 1" evidence="1">
    <location>
        <begin position="305"/>
        <end position="323"/>
    </location>
</feature>
<feature type="region of interest" description="CAHS motif 2" evidence="1">
    <location>
        <begin position="342"/>
        <end position="360"/>
    </location>
</feature>
<feature type="region of interest" description="Disordered" evidence="3">
    <location>
        <begin position="388"/>
        <end position="414"/>
    </location>
</feature>
<feature type="coiled-coil region" evidence="2">
    <location>
        <begin position="341"/>
        <end position="376"/>
    </location>
</feature>
<feature type="compositionally biased region" description="Basic and acidic residues" evidence="3">
    <location>
        <begin position="27"/>
        <end position="45"/>
    </location>
</feature>
<feature type="compositionally biased region" description="Basic and acidic residues" evidence="3">
    <location>
        <begin position="69"/>
        <end position="84"/>
    </location>
</feature>
<feature type="compositionally biased region" description="Low complexity" evidence="3">
    <location>
        <begin position="86"/>
        <end position="101"/>
    </location>
</feature>
<feature type="compositionally biased region" description="Low complexity" evidence="3">
    <location>
        <begin position="120"/>
        <end position="134"/>
    </location>
</feature>
<feature type="compositionally biased region" description="Polar residues" evidence="3">
    <location>
        <begin position="142"/>
        <end position="155"/>
    </location>
</feature>
<feature type="compositionally biased region" description="Polar residues" evidence="3">
    <location>
        <begin position="388"/>
        <end position="405"/>
    </location>
</feature>
<proteinExistence type="inferred from homology"/>
<gene>
    <name evidence="6" type="primary">CAHS 89226</name>
</gene>
<dbReference type="SMR" id="P0CU47"/>
<dbReference type="GO" id="GO:0005737">
    <property type="term" value="C:cytoplasm"/>
    <property type="evidence" value="ECO:0007669"/>
    <property type="project" value="UniProtKB-SubCell"/>
</dbReference>
<dbReference type="DisProt" id="DP01382"/>
<organism evidence="6">
    <name type="scientific">Hypsibius exemplaris</name>
    <name type="common">Freshwater tardigrade</name>
    <dbReference type="NCBI Taxonomy" id="2072580"/>
    <lineage>
        <taxon>Eukaryota</taxon>
        <taxon>Metazoa</taxon>
        <taxon>Ecdysozoa</taxon>
        <taxon>Tardigrada</taxon>
        <taxon>Eutardigrada</taxon>
        <taxon>Parachela</taxon>
        <taxon>Hypsibioidea</taxon>
        <taxon>Hypsibiidae</taxon>
        <taxon>Hypsibius</taxon>
    </lineage>
</organism>